<comment type="function">
    <text evidence="1">Endonuclease IV plays a role in DNA repair. It cleaves phosphodiester bonds at apurinic or apyrimidinic (AP) sites, generating a 3'-hydroxyl group and a 5'-terminal sugar phosphate.</text>
</comment>
<comment type="catalytic activity">
    <reaction evidence="1">
        <text>Endonucleolytic cleavage to 5'-phosphooligonucleotide end-products.</text>
        <dbReference type="EC" id="3.1.21.2"/>
    </reaction>
</comment>
<comment type="cofactor">
    <cofactor evidence="1">
        <name>Zn(2+)</name>
        <dbReference type="ChEBI" id="CHEBI:29105"/>
    </cofactor>
    <text evidence="1">Binds 3 Zn(2+) ions.</text>
</comment>
<comment type="similarity">
    <text evidence="1">Belongs to the AP endonuclease 2 family.</text>
</comment>
<feature type="chain" id="PRO_1000011315" description="Probable endonuclease 4">
    <location>
        <begin position="1"/>
        <end position="282"/>
    </location>
</feature>
<feature type="binding site" evidence="1">
    <location>
        <position position="67"/>
    </location>
    <ligand>
        <name>Zn(2+)</name>
        <dbReference type="ChEBI" id="CHEBI:29105"/>
        <label>1</label>
    </ligand>
</feature>
<feature type="binding site" evidence="1">
    <location>
        <position position="107"/>
    </location>
    <ligand>
        <name>Zn(2+)</name>
        <dbReference type="ChEBI" id="CHEBI:29105"/>
        <label>1</label>
    </ligand>
</feature>
<feature type="binding site" evidence="1">
    <location>
        <position position="144"/>
    </location>
    <ligand>
        <name>Zn(2+)</name>
        <dbReference type="ChEBI" id="CHEBI:29105"/>
        <label>1</label>
    </ligand>
</feature>
<feature type="binding site" evidence="1">
    <location>
        <position position="144"/>
    </location>
    <ligand>
        <name>Zn(2+)</name>
        <dbReference type="ChEBI" id="CHEBI:29105"/>
        <label>2</label>
    </ligand>
</feature>
<feature type="binding site" evidence="1">
    <location>
        <position position="178"/>
    </location>
    <ligand>
        <name>Zn(2+)</name>
        <dbReference type="ChEBI" id="CHEBI:29105"/>
        <label>2</label>
    </ligand>
</feature>
<feature type="binding site" evidence="1">
    <location>
        <position position="181"/>
    </location>
    <ligand>
        <name>Zn(2+)</name>
        <dbReference type="ChEBI" id="CHEBI:29105"/>
        <label>3</label>
    </ligand>
</feature>
<feature type="binding site" evidence="1">
    <location>
        <position position="215"/>
    </location>
    <ligand>
        <name>Zn(2+)</name>
        <dbReference type="ChEBI" id="CHEBI:29105"/>
        <label>2</label>
    </ligand>
</feature>
<feature type="binding site" evidence="1">
    <location>
        <position position="228"/>
    </location>
    <ligand>
        <name>Zn(2+)</name>
        <dbReference type="ChEBI" id="CHEBI:29105"/>
        <label>3</label>
    </ligand>
</feature>
<feature type="binding site" evidence="1">
    <location>
        <position position="230"/>
    </location>
    <ligand>
        <name>Zn(2+)</name>
        <dbReference type="ChEBI" id="CHEBI:29105"/>
        <label>3</label>
    </ligand>
</feature>
<feature type="binding site" evidence="1">
    <location>
        <position position="260"/>
    </location>
    <ligand>
        <name>Zn(2+)</name>
        <dbReference type="ChEBI" id="CHEBI:29105"/>
        <label>2</label>
    </ligand>
</feature>
<reference key="1">
    <citation type="journal article" date="2009" name="Stand. Genomic Sci.">
        <title>Complete genome sequence of Methanoculleus marisnigri Romesser et al. 1981 type strain JR1.</title>
        <authorList>
            <person name="Anderson I.J."/>
            <person name="Sieprawska-Lupa M."/>
            <person name="Lapidus A."/>
            <person name="Nolan M."/>
            <person name="Copeland A."/>
            <person name="Glavina Del Rio T."/>
            <person name="Tice H."/>
            <person name="Dalin E."/>
            <person name="Barry K."/>
            <person name="Saunders E."/>
            <person name="Han C."/>
            <person name="Brettin T."/>
            <person name="Detter J.C."/>
            <person name="Bruce D."/>
            <person name="Mikhailova N."/>
            <person name="Pitluck S."/>
            <person name="Hauser L."/>
            <person name="Land M."/>
            <person name="Lucas S."/>
            <person name="Richardson P."/>
            <person name="Whitman W.B."/>
            <person name="Kyrpides N.C."/>
        </authorList>
    </citation>
    <scope>NUCLEOTIDE SEQUENCE [LARGE SCALE GENOMIC DNA]</scope>
    <source>
        <strain>ATCC 35101 / DSM 1498 / JR1</strain>
    </source>
</reference>
<proteinExistence type="inferred from homology"/>
<dbReference type="EC" id="3.1.21.2" evidence="1"/>
<dbReference type="EMBL" id="CP000562">
    <property type="protein sequence ID" value="ABN56571.1"/>
    <property type="molecule type" value="Genomic_DNA"/>
</dbReference>
<dbReference type="RefSeq" id="WP_011843482.1">
    <property type="nucleotide sequence ID" value="NC_009051.1"/>
</dbReference>
<dbReference type="SMR" id="A3CT71"/>
<dbReference type="STRING" id="368407.Memar_0638"/>
<dbReference type="GeneID" id="4847932"/>
<dbReference type="KEGG" id="mem:Memar_0638"/>
<dbReference type="eggNOG" id="arCOG01894">
    <property type="taxonomic scope" value="Archaea"/>
</dbReference>
<dbReference type="HOGENOM" id="CLU_025885_0_1_2"/>
<dbReference type="OrthoDB" id="33250at2157"/>
<dbReference type="Proteomes" id="UP000002146">
    <property type="component" value="Chromosome"/>
</dbReference>
<dbReference type="GO" id="GO:0008833">
    <property type="term" value="F:deoxyribonuclease IV (phage-T4-induced) activity"/>
    <property type="evidence" value="ECO:0007669"/>
    <property type="project" value="UniProtKB-UniRule"/>
</dbReference>
<dbReference type="GO" id="GO:0003677">
    <property type="term" value="F:DNA binding"/>
    <property type="evidence" value="ECO:0007669"/>
    <property type="project" value="InterPro"/>
</dbReference>
<dbReference type="GO" id="GO:0003906">
    <property type="term" value="F:DNA-(apurinic or apyrimidinic site) endonuclease activity"/>
    <property type="evidence" value="ECO:0007669"/>
    <property type="project" value="TreeGrafter"/>
</dbReference>
<dbReference type="GO" id="GO:0008081">
    <property type="term" value="F:phosphoric diester hydrolase activity"/>
    <property type="evidence" value="ECO:0007669"/>
    <property type="project" value="TreeGrafter"/>
</dbReference>
<dbReference type="GO" id="GO:0008270">
    <property type="term" value="F:zinc ion binding"/>
    <property type="evidence" value="ECO:0007669"/>
    <property type="project" value="UniProtKB-UniRule"/>
</dbReference>
<dbReference type="GO" id="GO:0006284">
    <property type="term" value="P:base-excision repair"/>
    <property type="evidence" value="ECO:0007669"/>
    <property type="project" value="TreeGrafter"/>
</dbReference>
<dbReference type="CDD" id="cd00019">
    <property type="entry name" value="AP2Ec"/>
    <property type="match status" value="1"/>
</dbReference>
<dbReference type="FunFam" id="3.20.20.150:FF:000001">
    <property type="entry name" value="Probable endonuclease 4"/>
    <property type="match status" value="1"/>
</dbReference>
<dbReference type="Gene3D" id="3.20.20.150">
    <property type="entry name" value="Divalent-metal-dependent TIM barrel enzymes"/>
    <property type="match status" value="1"/>
</dbReference>
<dbReference type="HAMAP" id="MF_00152">
    <property type="entry name" value="Nfo"/>
    <property type="match status" value="1"/>
</dbReference>
<dbReference type="InterPro" id="IPR001719">
    <property type="entry name" value="AP_endonuc_2"/>
</dbReference>
<dbReference type="InterPro" id="IPR018246">
    <property type="entry name" value="AP_endonuc_F2_Zn_BS"/>
</dbReference>
<dbReference type="InterPro" id="IPR036237">
    <property type="entry name" value="Xyl_isomerase-like_sf"/>
</dbReference>
<dbReference type="InterPro" id="IPR013022">
    <property type="entry name" value="Xyl_isomerase-like_TIM-brl"/>
</dbReference>
<dbReference type="NCBIfam" id="TIGR00587">
    <property type="entry name" value="nfo"/>
    <property type="match status" value="1"/>
</dbReference>
<dbReference type="PANTHER" id="PTHR21445:SF0">
    <property type="entry name" value="APURINIC-APYRIMIDINIC ENDONUCLEASE"/>
    <property type="match status" value="1"/>
</dbReference>
<dbReference type="PANTHER" id="PTHR21445">
    <property type="entry name" value="ENDONUCLEASE IV ENDODEOXYRIBONUCLEASE IV"/>
    <property type="match status" value="1"/>
</dbReference>
<dbReference type="Pfam" id="PF01261">
    <property type="entry name" value="AP_endonuc_2"/>
    <property type="match status" value="1"/>
</dbReference>
<dbReference type="SMART" id="SM00518">
    <property type="entry name" value="AP2Ec"/>
    <property type="match status" value="1"/>
</dbReference>
<dbReference type="SUPFAM" id="SSF51658">
    <property type="entry name" value="Xylose isomerase-like"/>
    <property type="match status" value="1"/>
</dbReference>
<dbReference type="PROSITE" id="PS00730">
    <property type="entry name" value="AP_NUCLEASE_F2_2"/>
    <property type="match status" value="1"/>
</dbReference>
<dbReference type="PROSITE" id="PS51432">
    <property type="entry name" value="AP_NUCLEASE_F2_4"/>
    <property type="match status" value="1"/>
</dbReference>
<accession>A3CT71</accession>
<gene>
    <name evidence="1" type="primary">nfo</name>
    <name type="ordered locus">Memar_0638</name>
</gene>
<organism>
    <name type="scientific">Methanoculleus marisnigri (strain ATCC 35101 / DSM 1498 / JR1)</name>
    <dbReference type="NCBI Taxonomy" id="368407"/>
    <lineage>
        <taxon>Archaea</taxon>
        <taxon>Methanobacteriati</taxon>
        <taxon>Methanobacteriota</taxon>
        <taxon>Stenosarchaea group</taxon>
        <taxon>Methanomicrobia</taxon>
        <taxon>Methanomicrobiales</taxon>
        <taxon>Methanomicrobiaceae</taxon>
        <taxon>Methanoculleus</taxon>
    </lineage>
</organism>
<sequence length="282" mass="30070">MVLVGCHVSIAGSIDRAVGRALDAGCDTFQIFSRNPRGWKVKDLDPGLAGAFRAAVSASGIGPVVDHMPYLPNPASPDAEIYEKSVAALAGELRRCSLLGIPYLVTHLGHHRGAGMEAGQERVVAAINRAFEDAGESDVMLLLENTAGEKNSVGTTVDNLSRIVDGIDAKERVGICFDTCHAFAAGYDLRTAEGVDAVLGEIDDAIDLSRLRVVHLNDCKGDLGSGLDRHEHIGLGRIGEDGFRHILRHPAVRRLPLICETPVDERRSDTGNIAKVRELAGA</sequence>
<protein>
    <recommendedName>
        <fullName evidence="1">Probable endonuclease 4</fullName>
        <ecNumber evidence="1">3.1.21.2</ecNumber>
    </recommendedName>
    <alternativeName>
        <fullName evidence="1">Endodeoxyribonuclease IV</fullName>
    </alternativeName>
    <alternativeName>
        <fullName evidence="1">Endonuclease IV</fullName>
    </alternativeName>
</protein>
<evidence type="ECO:0000255" key="1">
    <source>
        <dbReference type="HAMAP-Rule" id="MF_00152"/>
    </source>
</evidence>
<keyword id="KW-0227">DNA damage</keyword>
<keyword id="KW-0234">DNA repair</keyword>
<keyword id="KW-0255">Endonuclease</keyword>
<keyword id="KW-0378">Hydrolase</keyword>
<keyword id="KW-0479">Metal-binding</keyword>
<keyword id="KW-0540">Nuclease</keyword>
<keyword id="KW-0862">Zinc</keyword>
<name>END4_METMJ</name>